<dbReference type="EMBL" id="CU928160">
    <property type="protein sequence ID" value="CAR01113.1"/>
    <property type="molecule type" value="Genomic_DNA"/>
</dbReference>
<dbReference type="RefSeq" id="WP_000883400.1">
    <property type="nucleotide sequence ID" value="NC_011741.1"/>
</dbReference>
<dbReference type="SMR" id="B7M8P8"/>
<dbReference type="GeneID" id="93777687"/>
<dbReference type="KEGG" id="ecr:ECIAI1_4370"/>
<dbReference type="HOGENOM" id="CLU_098807_3_0_6"/>
<dbReference type="GO" id="GO:0005737">
    <property type="term" value="C:cytoplasm"/>
    <property type="evidence" value="ECO:0007669"/>
    <property type="project" value="UniProtKB-SubCell"/>
</dbReference>
<dbReference type="GO" id="GO:0005507">
    <property type="term" value="F:copper ion binding"/>
    <property type="evidence" value="ECO:0007669"/>
    <property type="project" value="UniProtKB-UniRule"/>
</dbReference>
<dbReference type="GO" id="GO:0010038">
    <property type="term" value="P:response to metal ion"/>
    <property type="evidence" value="ECO:0007669"/>
    <property type="project" value="InterPro"/>
</dbReference>
<dbReference type="FunFam" id="3.30.70.120:FF:000004">
    <property type="entry name" value="Divalent-cation tolerance protein CutA"/>
    <property type="match status" value="1"/>
</dbReference>
<dbReference type="Gene3D" id="3.30.70.120">
    <property type="match status" value="1"/>
</dbReference>
<dbReference type="HAMAP" id="MF_01160">
    <property type="entry name" value="CutA"/>
    <property type="match status" value="1"/>
</dbReference>
<dbReference type="InterPro" id="IPR023700">
    <property type="entry name" value="CutA_Enterobact"/>
</dbReference>
<dbReference type="InterPro" id="IPR004323">
    <property type="entry name" value="Ion_tolerance_CutA"/>
</dbReference>
<dbReference type="InterPro" id="IPR011322">
    <property type="entry name" value="N-reg_PII-like_a/b"/>
</dbReference>
<dbReference type="InterPro" id="IPR015867">
    <property type="entry name" value="N-reg_PII/ATP_PRibTrfase_C"/>
</dbReference>
<dbReference type="NCBIfam" id="NF007930">
    <property type="entry name" value="PRK10645.1"/>
    <property type="match status" value="1"/>
</dbReference>
<dbReference type="PANTHER" id="PTHR23419">
    <property type="entry name" value="DIVALENT CATION TOLERANCE CUTA-RELATED"/>
    <property type="match status" value="1"/>
</dbReference>
<dbReference type="PANTHER" id="PTHR23419:SF8">
    <property type="entry name" value="FI09726P"/>
    <property type="match status" value="1"/>
</dbReference>
<dbReference type="Pfam" id="PF03091">
    <property type="entry name" value="CutA1"/>
    <property type="match status" value="1"/>
</dbReference>
<dbReference type="SUPFAM" id="SSF54913">
    <property type="entry name" value="GlnB-like"/>
    <property type="match status" value="1"/>
</dbReference>
<comment type="function">
    <text evidence="1">Involved in resistance toward heavy metals.</text>
</comment>
<comment type="cofactor">
    <cofactor evidence="1">
        <name>Cu cation</name>
        <dbReference type="ChEBI" id="CHEBI:23378"/>
    </cofactor>
    <text evidence="1">Binds 1 copper ion per subunit.</text>
</comment>
<comment type="subunit">
    <text evidence="1">Homotrimer.</text>
</comment>
<comment type="subcellular location">
    <subcellularLocation>
        <location evidence="1">Cytoplasm</location>
    </subcellularLocation>
</comment>
<comment type="similarity">
    <text evidence="1">Belongs to the CutA family.</text>
</comment>
<organism>
    <name type="scientific">Escherichia coli O8 (strain IAI1)</name>
    <dbReference type="NCBI Taxonomy" id="585034"/>
    <lineage>
        <taxon>Bacteria</taxon>
        <taxon>Pseudomonadati</taxon>
        <taxon>Pseudomonadota</taxon>
        <taxon>Gammaproteobacteria</taxon>
        <taxon>Enterobacterales</taxon>
        <taxon>Enterobacteriaceae</taxon>
        <taxon>Escherichia</taxon>
    </lineage>
</organism>
<keyword id="KW-0186">Copper</keyword>
<keyword id="KW-0963">Cytoplasm</keyword>
<keyword id="KW-0479">Metal-binding</keyword>
<proteinExistence type="inferred from homology"/>
<evidence type="ECO:0000255" key="1">
    <source>
        <dbReference type="HAMAP-Rule" id="MF_01160"/>
    </source>
</evidence>
<reference key="1">
    <citation type="journal article" date="2009" name="PLoS Genet.">
        <title>Organised genome dynamics in the Escherichia coli species results in highly diverse adaptive paths.</title>
        <authorList>
            <person name="Touchon M."/>
            <person name="Hoede C."/>
            <person name="Tenaillon O."/>
            <person name="Barbe V."/>
            <person name="Baeriswyl S."/>
            <person name="Bidet P."/>
            <person name="Bingen E."/>
            <person name="Bonacorsi S."/>
            <person name="Bouchier C."/>
            <person name="Bouvet O."/>
            <person name="Calteau A."/>
            <person name="Chiapello H."/>
            <person name="Clermont O."/>
            <person name="Cruveiller S."/>
            <person name="Danchin A."/>
            <person name="Diard M."/>
            <person name="Dossat C."/>
            <person name="Karoui M.E."/>
            <person name="Frapy E."/>
            <person name="Garry L."/>
            <person name="Ghigo J.M."/>
            <person name="Gilles A.M."/>
            <person name="Johnson J."/>
            <person name="Le Bouguenec C."/>
            <person name="Lescat M."/>
            <person name="Mangenot S."/>
            <person name="Martinez-Jehanne V."/>
            <person name="Matic I."/>
            <person name="Nassif X."/>
            <person name="Oztas S."/>
            <person name="Petit M.A."/>
            <person name="Pichon C."/>
            <person name="Rouy Z."/>
            <person name="Ruf C.S."/>
            <person name="Schneider D."/>
            <person name="Tourret J."/>
            <person name="Vacherie B."/>
            <person name="Vallenet D."/>
            <person name="Medigue C."/>
            <person name="Rocha E.P.C."/>
            <person name="Denamur E."/>
        </authorList>
    </citation>
    <scope>NUCLEOTIDE SEQUENCE [LARGE SCALE GENOMIC DNA]</scope>
    <source>
        <strain>IAI1</strain>
    </source>
</reference>
<protein>
    <recommendedName>
        <fullName evidence="1">Divalent-cation tolerance protein CutA</fullName>
    </recommendedName>
</protein>
<name>CUTA_ECO8A</name>
<sequence>MLDEKSSNTASVVVLCTAPDEATAQDLAAKVLAEKLAACATLIPGATSLYYWEGKLEQEYEVQMILKTTVSHQQALLECLKSHHPYQTPELLVLPVTHGDTDYLSWLNASLR</sequence>
<gene>
    <name evidence="1" type="primary">cutA</name>
    <name type="ordered locus">ECIAI1_4370</name>
</gene>
<accession>B7M8P8</accession>
<feature type="chain" id="PRO_1000137842" description="Divalent-cation tolerance protein CutA">
    <location>
        <begin position="1"/>
        <end position="112"/>
    </location>
</feature>
<feature type="binding site" evidence="1">
    <location>
        <position position="16"/>
    </location>
    <ligand>
        <name>Cu cation</name>
        <dbReference type="ChEBI" id="CHEBI:23378"/>
    </ligand>
</feature>
<feature type="binding site" evidence="1">
    <location>
        <position position="83"/>
    </location>
    <ligand>
        <name>Cu cation</name>
        <dbReference type="ChEBI" id="CHEBI:23378"/>
    </ligand>
</feature>
<feature type="binding site" evidence="1">
    <location>
        <position position="84"/>
    </location>
    <ligand>
        <name>Cu cation</name>
        <dbReference type="ChEBI" id="CHEBI:23378"/>
    </ligand>
</feature>